<protein>
    <recommendedName>
        <fullName evidence="4">Staphylococcal superantigen-like 1</fullName>
        <ecNumber evidence="3">3.4.21.-</ecNumber>
    </recommendedName>
</protein>
<keyword id="KW-0378">Hydrolase</keyword>
<keyword id="KW-0645">Protease</keyword>
<keyword id="KW-0964">Secreted</keyword>
<keyword id="KW-0732">Signal</keyword>
<keyword id="KW-0843">Virulence</keyword>
<organism>
    <name type="scientific">Staphylococcus aureus (strain Newman)</name>
    <dbReference type="NCBI Taxonomy" id="426430"/>
    <lineage>
        <taxon>Bacteria</taxon>
        <taxon>Bacillati</taxon>
        <taxon>Bacillota</taxon>
        <taxon>Bacilli</taxon>
        <taxon>Bacillales</taxon>
        <taxon>Staphylococcaceae</taxon>
        <taxon>Staphylococcus</taxon>
    </lineage>
</organism>
<comment type="function">
    <text evidence="3">Mediates virulence by proteolytically cleaving host proteins, including collagens types I and IV as well as human cytokines IL8, IL17A, and IFN-gamma.</text>
</comment>
<comment type="subunit">
    <text evidence="3">Homodimer.</text>
</comment>
<comment type="subcellular location">
    <subcellularLocation>
        <location evidence="1">Secreted</location>
    </subcellularLocation>
</comment>
<comment type="similarity">
    <text evidence="5">Belongs to the staphylococcal/streptococcal toxin family.</text>
</comment>
<reference key="1">
    <citation type="journal article" date="2008" name="J. Bacteriol.">
        <title>Genome sequence of Staphylococcus aureus strain Newman and comparative analysis of staphylococcal genomes: polymorphism and evolution of two major pathogenicity islands.</title>
        <authorList>
            <person name="Baba T."/>
            <person name="Bae T."/>
            <person name="Schneewind O."/>
            <person name="Takeuchi F."/>
            <person name="Hiramatsu K."/>
        </authorList>
    </citation>
    <scope>NUCLEOTIDE SEQUENCE [LARGE SCALE GENOMIC DNA]</scope>
    <source>
        <strain>Newman</strain>
    </source>
</reference>
<reference key="2">
    <citation type="journal article" date="2019" name="Pathogens">
        <title>Staphylococcus aureus Superantigen-Like Protein SSL1: A Toxic Protease.</title>
        <authorList>
            <person name="Tang A."/>
            <person name="Caballero A.R."/>
            <person name="Bierdeman M.A."/>
            <person name="Marquart M.E."/>
            <person name="Foster T.J."/>
            <person name="Monk I.R."/>
            <person name="O'Callaghan R.J."/>
        </authorList>
    </citation>
    <scope>FUNCTION</scope>
    <scope>SUBUNIT</scope>
</reference>
<feature type="signal peptide" evidence="2">
    <location>
        <begin position="1"/>
        <end position="30"/>
    </location>
</feature>
<feature type="chain" id="PRO_5002613332" description="Staphylococcal superantigen-like 1" evidence="2">
    <location>
        <begin position="31"/>
        <end position="226"/>
    </location>
</feature>
<dbReference type="EC" id="3.4.21.-" evidence="3"/>
<dbReference type="EMBL" id="AP009351">
    <property type="protein sequence ID" value="BAF66660.1"/>
    <property type="molecule type" value="Genomic_DNA"/>
</dbReference>
<dbReference type="RefSeq" id="WP_000669005.1">
    <property type="nucleotide sequence ID" value="NZ_JBBIAE010000011.1"/>
</dbReference>
<dbReference type="SMR" id="A0A0H3KAV3"/>
<dbReference type="KEGG" id="sae:NWMN_0388"/>
<dbReference type="HOGENOM" id="CLU_054950_1_0_9"/>
<dbReference type="Proteomes" id="UP000006386">
    <property type="component" value="Chromosome"/>
</dbReference>
<dbReference type="GO" id="GO:0005576">
    <property type="term" value="C:extracellular region"/>
    <property type="evidence" value="ECO:0007669"/>
    <property type="project" value="UniProtKB-SubCell"/>
</dbReference>
<dbReference type="GO" id="GO:0008233">
    <property type="term" value="F:peptidase activity"/>
    <property type="evidence" value="ECO:0007669"/>
    <property type="project" value="UniProtKB-KW"/>
</dbReference>
<dbReference type="GO" id="GO:0006508">
    <property type="term" value="P:proteolysis"/>
    <property type="evidence" value="ECO:0007669"/>
    <property type="project" value="UniProtKB-KW"/>
</dbReference>
<dbReference type="Gene3D" id="2.40.50.110">
    <property type="match status" value="1"/>
</dbReference>
<dbReference type="Gene3D" id="3.10.20.120">
    <property type="match status" value="1"/>
</dbReference>
<dbReference type="InterPro" id="IPR008992">
    <property type="entry name" value="Enterotoxin"/>
</dbReference>
<dbReference type="InterPro" id="IPR015282">
    <property type="entry name" value="SSL_OB"/>
</dbReference>
<dbReference type="InterPro" id="IPR008375">
    <property type="entry name" value="Staph_exotoxin"/>
</dbReference>
<dbReference type="InterPro" id="IPR016091">
    <property type="entry name" value="SuperAg_toxin_C"/>
</dbReference>
<dbReference type="InterPro" id="IPR013307">
    <property type="entry name" value="Superantigen_bac"/>
</dbReference>
<dbReference type="InterPro" id="IPR006123">
    <property type="entry name" value="Toxin_b-grasp_Staph/Strep"/>
</dbReference>
<dbReference type="NCBIfam" id="NF009595">
    <property type="entry name" value="PRK13037.1"/>
    <property type="match status" value="1"/>
</dbReference>
<dbReference type="Pfam" id="PF09199">
    <property type="entry name" value="SSL_OB"/>
    <property type="match status" value="1"/>
</dbReference>
<dbReference type="Pfam" id="PF02876">
    <property type="entry name" value="Stap_Strp_tox_C"/>
    <property type="match status" value="1"/>
</dbReference>
<dbReference type="PRINTS" id="PR01898">
    <property type="entry name" value="SAGSUPRFAMLY"/>
</dbReference>
<dbReference type="PRINTS" id="PR01800">
    <property type="entry name" value="STAPHEXOTOXN"/>
</dbReference>
<dbReference type="PRINTS" id="PR01501">
    <property type="entry name" value="TOXICSSTOXIN"/>
</dbReference>
<dbReference type="SUPFAM" id="SSF50203">
    <property type="entry name" value="Bacterial enterotoxins"/>
    <property type="match status" value="1"/>
</dbReference>
<dbReference type="SUPFAM" id="SSF54334">
    <property type="entry name" value="Superantigen toxins, C-terminal domain"/>
    <property type="match status" value="1"/>
</dbReference>
<gene>
    <name evidence="4" type="primary">ssl1</name>
    <name type="ordered locus">NWMN_0388</name>
</gene>
<evidence type="ECO:0000250" key="1">
    <source>
        <dbReference type="UniProtKB" id="Q2G1S8"/>
    </source>
</evidence>
<evidence type="ECO:0000255" key="2"/>
<evidence type="ECO:0000269" key="3">
    <source>
    </source>
</evidence>
<evidence type="ECO:0000303" key="4">
    <source>
    </source>
</evidence>
<evidence type="ECO:0000305" key="5"/>
<accession>A0A0H3KAV3</accession>
<sequence>MKFKAIAKASLALGMLATGVITSNVQSVQAKAEVKQQSESELKHYYNKPILERKNVTGFKYTDEGKHYLEVTVGQQHSRITLLGSDKDKFKDGENSNIDVFILREGDSRQATNYSIGGVTKSNSVQYIDYINTPILEIKKDNEDVLKDFYYISKEDISLKELDYRLRERAIKQHGLYSNGLKQGQITITMNDGTTHTIDLSQKLEKERMGESIDGTKINKILVEMK</sequence>
<proteinExistence type="evidence at protein level"/>
<name>SSL1_STAAE</name>